<organism>
    <name type="scientific">Pseudomonas syringae pv. syringae (strain B728a)</name>
    <dbReference type="NCBI Taxonomy" id="205918"/>
    <lineage>
        <taxon>Bacteria</taxon>
        <taxon>Pseudomonadati</taxon>
        <taxon>Pseudomonadota</taxon>
        <taxon>Gammaproteobacteria</taxon>
        <taxon>Pseudomonadales</taxon>
        <taxon>Pseudomonadaceae</taxon>
        <taxon>Pseudomonas</taxon>
        <taxon>Pseudomonas syringae</taxon>
    </lineage>
</organism>
<accession>Q4ZXC8</accession>
<comment type="function">
    <text evidence="1">Required for disulfide bond formation in some periplasmic proteins. Acts by oxidizing the DsbA protein.</text>
</comment>
<comment type="subcellular location">
    <subcellularLocation>
        <location evidence="1">Cell inner membrane</location>
        <topology evidence="1">Multi-pass membrane protein</topology>
    </subcellularLocation>
</comment>
<comment type="similarity">
    <text evidence="1">Belongs to the DsbB family.</text>
</comment>
<name>DSBB1_PSEU2</name>
<reference key="1">
    <citation type="journal article" date="2005" name="Proc. Natl. Acad. Sci. U.S.A.">
        <title>Comparison of the complete genome sequences of Pseudomonas syringae pv. syringae B728a and pv. tomato DC3000.</title>
        <authorList>
            <person name="Feil H."/>
            <person name="Feil W.S."/>
            <person name="Chain P."/>
            <person name="Larimer F."/>
            <person name="Dibartolo G."/>
            <person name="Copeland A."/>
            <person name="Lykidis A."/>
            <person name="Trong S."/>
            <person name="Nolan M."/>
            <person name="Goltsman E."/>
            <person name="Thiel J."/>
            <person name="Malfatti S."/>
            <person name="Loper J.E."/>
            <person name="Lapidus A."/>
            <person name="Detter J.C."/>
            <person name="Land M."/>
            <person name="Richardson P.M."/>
            <person name="Kyrpides N.C."/>
            <person name="Ivanova N."/>
            <person name="Lindow S.E."/>
        </authorList>
    </citation>
    <scope>NUCLEOTIDE SEQUENCE [LARGE SCALE GENOMIC DNA]</scope>
    <source>
        <strain>B728a</strain>
    </source>
</reference>
<gene>
    <name evidence="1" type="primary">dsbB1</name>
    <name type="ordered locus">Psyr_1140</name>
</gene>
<keyword id="KW-0997">Cell inner membrane</keyword>
<keyword id="KW-1003">Cell membrane</keyword>
<keyword id="KW-0143">Chaperone</keyword>
<keyword id="KW-1015">Disulfide bond</keyword>
<keyword id="KW-0249">Electron transport</keyword>
<keyword id="KW-0472">Membrane</keyword>
<keyword id="KW-0560">Oxidoreductase</keyword>
<keyword id="KW-0676">Redox-active center</keyword>
<keyword id="KW-0812">Transmembrane</keyword>
<keyword id="KW-1133">Transmembrane helix</keyword>
<keyword id="KW-0813">Transport</keyword>
<feature type="chain" id="PRO_0000298394" description="Disulfide bond formation protein B 1">
    <location>
        <begin position="1"/>
        <end position="169"/>
    </location>
</feature>
<feature type="topological domain" description="Cytoplasmic" evidence="1">
    <location>
        <begin position="1"/>
        <end position="14"/>
    </location>
</feature>
<feature type="transmembrane region" description="Helical" evidence="1">
    <location>
        <begin position="15"/>
        <end position="31"/>
    </location>
</feature>
<feature type="topological domain" description="Periplasmic" evidence="1">
    <location>
        <begin position="32"/>
        <end position="49"/>
    </location>
</feature>
<feature type="transmembrane region" description="Helical" evidence="1">
    <location>
        <begin position="50"/>
        <end position="65"/>
    </location>
</feature>
<feature type="topological domain" description="Cytoplasmic" evidence="1">
    <location>
        <begin position="66"/>
        <end position="72"/>
    </location>
</feature>
<feature type="transmembrane region" description="Helical" evidence="1">
    <location>
        <begin position="73"/>
        <end position="89"/>
    </location>
</feature>
<feature type="topological domain" description="Periplasmic" evidence="1">
    <location>
        <begin position="90"/>
        <end position="144"/>
    </location>
</feature>
<feature type="transmembrane region" description="Helical" evidence="1">
    <location>
        <begin position="145"/>
        <end position="163"/>
    </location>
</feature>
<feature type="topological domain" description="Cytoplasmic" evidence="1">
    <location>
        <begin position="164"/>
        <end position="169"/>
    </location>
</feature>
<feature type="disulfide bond" description="Redox-active" evidence="1">
    <location>
        <begin position="41"/>
        <end position="44"/>
    </location>
</feature>
<feature type="disulfide bond" description="Redox-active" evidence="1">
    <location>
        <begin position="102"/>
        <end position="130"/>
    </location>
</feature>
<dbReference type="EMBL" id="CP000075">
    <property type="protein sequence ID" value="AAY36194.1"/>
    <property type="molecule type" value="Genomic_DNA"/>
</dbReference>
<dbReference type="RefSeq" id="WP_004406623.1">
    <property type="nucleotide sequence ID" value="NC_007005.1"/>
</dbReference>
<dbReference type="RefSeq" id="YP_234232.1">
    <property type="nucleotide sequence ID" value="NC_007005.1"/>
</dbReference>
<dbReference type="SMR" id="Q4ZXC8"/>
<dbReference type="STRING" id="205918.Psyr_1140"/>
<dbReference type="KEGG" id="psb:Psyr_1140"/>
<dbReference type="PATRIC" id="fig|205918.7.peg.1173"/>
<dbReference type="eggNOG" id="COG1495">
    <property type="taxonomic scope" value="Bacteria"/>
</dbReference>
<dbReference type="HOGENOM" id="CLU_098660_1_0_6"/>
<dbReference type="OrthoDB" id="3711263at2"/>
<dbReference type="Proteomes" id="UP000000426">
    <property type="component" value="Chromosome"/>
</dbReference>
<dbReference type="GO" id="GO:0005886">
    <property type="term" value="C:plasma membrane"/>
    <property type="evidence" value="ECO:0007669"/>
    <property type="project" value="UniProtKB-SubCell"/>
</dbReference>
<dbReference type="GO" id="GO:0009055">
    <property type="term" value="F:electron transfer activity"/>
    <property type="evidence" value="ECO:0007669"/>
    <property type="project" value="UniProtKB-UniRule"/>
</dbReference>
<dbReference type="GO" id="GO:0015035">
    <property type="term" value="F:protein-disulfide reductase activity"/>
    <property type="evidence" value="ECO:0007669"/>
    <property type="project" value="UniProtKB-UniRule"/>
</dbReference>
<dbReference type="GO" id="GO:0006457">
    <property type="term" value="P:protein folding"/>
    <property type="evidence" value="ECO:0007669"/>
    <property type="project" value="InterPro"/>
</dbReference>
<dbReference type="Gene3D" id="1.20.1550.10">
    <property type="entry name" value="DsbB-like"/>
    <property type="match status" value="1"/>
</dbReference>
<dbReference type="HAMAP" id="MF_00286">
    <property type="entry name" value="DsbB"/>
    <property type="match status" value="1"/>
</dbReference>
<dbReference type="InterPro" id="IPR003752">
    <property type="entry name" value="DiS_bond_form_DsbB/BdbC"/>
</dbReference>
<dbReference type="InterPro" id="IPR022920">
    <property type="entry name" value="Disulphide_bond_form_DsbB"/>
</dbReference>
<dbReference type="InterPro" id="IPR050183">
    <property type="entry name" value="DsbB"/>
</dbReference>
<dbReference type="InterPro" id="IPR023380">
    <property type="entry name" value="DsbB-like_sf"/>
</dbReference>
<dbReference type="NCBIfam" id="NF002552">
    <property type="entry name" value="PRK02110.1"/>
    <property type="match status" value="1"/>
</dbReference>
<dbReference type="PANTHER" id="PTHR36570">
    <property type="entry name" value="DISULFIDE BOND FORMATION PROTEIN B"/>
    <property type="match status" value="1"/>
</dbReference>
<dbReference type="PANTHER" id="PTHR36570:SF3">
    <property type="entry name" value="DISULFIDE BOND FORMATION PROTEIN B"/>
    <property type="match status" value="1"/>
</dbReference>
<dbReference type="Pfam" id="PF02600">
    <property type="entry name" value="DsbB"/>
    <property type="match status" value="1"/>
</dbReference>
<dbReference type="SUPFAM" id="SSF158442">
    <property type="entry name" value="DsbB-like"/>
    <property type="match status" value="1"/>
</dbReference>
<proteinExistence type="inferred from homology"/>
<evidence type="ECO:0000255" key="1">
    <source>
        <dbReference type="HAMAP-Rule" id="MF_00286"/>
    </source>
</evidence>
<protein>
    <recommendedName>
        <fullName evidence="1">Disulfide bond formation protein B 1</fullName>
    </recommendedName>
    <alternativeName>
        <fullName evidence="1">Disulfide oxidoreductase 1</fullName>
    </alternativeName>
</protein>
<sequence>MSDNTLYLRREKRFLVLLGIICLALIGGALYMQVVLDEAPCPLCILQRYALLFIAIFAFIGAAMPGRRSVTAFETLVTLSALGGIAAAGRHVWILAHPSDSCGIDVLQPIVDGLPLATLFPTGFQVSGFCTTPYPPVLGLSLAQWALTAFVLTAVLVPACIIRNRRKPY</sequence>